<accession>P9WEX6</accession>
<feature type="chain" id="PRO_0000451525" description="Non-reducing polyketide synthase dpmaA">
    <location>
        <begin position="1"/>
        <end position="2181"/>
    </location>
</feature>
<feature type="domain" description="Ketosynthase family 3 (KS3)" evidence="3">
    <location>
        <begin position="347"/>
        <end position="779"/>
    </location>
</feature>
<feature type="domain" description="PKS/mFAS DH" evidence="4">
    <location>
        <begin position="1269"/>
        <end position="1579"/>
    </location>
</feature>
<feature type="domain" description="Carrier" evidence="2">
    <location>
        <begin position="1677"/>
        <end position="1753"/>
    </location>
</feature>
<feature type="region of interest" description="N-terminal acylcarrier protein transacylase domain (SAT)" evidence="1">
    <location>
        <begin position="74"/>
        <end position="180"/>
    </location>
</feature>
<feature type="region of interest" description="Malonyl-CoA:ACP transacylase (MAT) domain" evidence="1">
    <location>
        <begin position="891"/>
        <end position="1193"/>
    </location>
</feature>
<feature type="region of interest" description="N-terminal hotdog fold" evidence="4">
    <location>
        <begin position="1269"/>
        <end position="1401"/>
    </location>
</feature>
<feature type="region of interest" description="Product template (PT) domain" evidence="1">
    <location>
        <begin position="1276"/>
        <end position="1573"/>
    </location>
</feature>
<feature type="region of interest" description="C-terminal hotdog fold" evidence="4">
    <location>
        <begin position="1425"/>
        <end position="1579"/>
    </location>
</feature>
<feature type="region of interest" description="Disordered" evidence="6">
    <location>
        <begin position="1587"/>
        <end position="1618"/>
    </location>
</feature>
<feature type="region of interest" description="Disordered" evidence="6">
    <location>
        <begin position="1652"/>
        <end position="1675"/>
    </location>
</feature>
<feature type="region of interest" description="Methyltransferase (CMeT) domain" evidence="1">
    <location>
        <begin position="1982"/>
        <end position="2164"/>
    </location>
</feature>
<feature type="compositionally biased region" description="Polar residues" evidence="6">
    <location>
        <begin position="1587"/>
        <end position="1603"/>
    </location>
</feature>
<feature type="compositionally biased region" description="Low complexity" evidence="6">
    <location>
        <begin position="1653"/>
        <end position="1670"/>
    </location>
</feature>
<feature type="active site" description="For beta-ketoacyl synthase activity" evidence="3">
    <location>
        <position position="525"/>
    </location>
</feature>
<feature type="active site" description="For beta-ketoacyl synthase activity" evidence="3">
    <location>
        <position position="661"/>
    </location>
</feature>
<feature type="active site" description="For beta-ketoacyl synthase activity" evidence="3">
    <location>
        <position position="702"/>
    </location>
</feature>
<feature type="active site" description="For acyl/malonyl transferase activity" evidence="5">
    <location>
        <position position="977"/>
    </location>
</feature>
<feature type="modified residue" description="O-(pantetheine 4'-phosphoryl)serine" evidence="2">
    <location>
        <position position="1713"/>
    </location>
</feature>
<organism>
    <name type="scientific">Metarhizium anisopliae</name>
    <name type="common">Entomophthora anisopliae</name>
    <dbReference type="NCBI Taxonomy" id="5530"/>
    <lineage>
        <taxon>Eukaryota</taxon>
        <taxon>Fungi</taxon>
        <taxon>Dikarya</taxon>
        <taxon>Ascomycota</taxon>
        <taxon>Pezizomycotina</taxon>
        <taxon>Sordariomycetes</taxon>
        <taxon>Hypocreomycetidae</taxon>
        <taxon>Hypocreales</taxon>
        <taxon>Clavicipitaceae</taxon>
        <taxon>Metarhizium</taxon>
    </lineage>
</organism>
<proteinExistence type="evidence at protein level"/>
<name>DPMAA_METAN</name>
<reference key="1">
    <citation type="journal article" date="2014" name="BMC Genomics">
        <title>Comparative genome analysis of entomopathogenic fungi reveals a complex set of secreted proteins.</title>
        <authorList>
            <person name="Staats C.C."/>
            <person name="Junges A."/>
            <person name="Guedes R.L."/>
            <person name="Thompson C.E."/>
            <person name="de Morais G.L."/>
            <person name="Boldo J.T."/>
            <person name="de Almeida L.G."/>
            <person name="Andreis F.C."/>
            <person name="Gerber A.L."/>
            <person name="Sbaraini N."/>
            <person name="da Paixao R.L."/>
            <person name="Broetto L."/>
            <person name="Landell M."/>
            <person name="Santi L."/>
            <person name="Beys-da-Silva W.O."/>
            <person name="Silveira C.P."/>
            <person name="Serrano T.R."/>
            <person name="de Oliveira E.S."/>
            <person name="Kmetzsch L."/>
            <person name="Vainstein M.H."/>
            <person name="de Vasconcelos A.T."/>
            <person name="Schrank A."/>
        </authorList>
    </citation>
    <scope>NUCLEOTIDE SEQUENCE [LARGE SCALE GENOMIC DNA]</scope>
</reference>
<reference key="2">
    <citation type="journal article" date="2020" name="Nat. Commun.">
        <title>Synthetic biology based construction of biological activity-related library of fungal decalin-containing diterpenoid pyrones.</title>
        <authorList>
            <person name="Tsukada K."/>
            <person name="Shinki S."/>
            <person name="Kaneko A."/>
            <person name="Murakami K."/>
            <person name="Irie K."/>
            <person name="Murai M."/>
            <person name="Miyoshi H."/>
            <person name="Dan S."/>
            <person name="Kawaji K."/>
            <person name="Hayashi H."/>
            <person name="Kodama E.N."/>
            <person name="Hori A."/>
            <person name="Salim E."/>
            <person name="Kuraishi T."/>
            <person name="Hirata N."/>
            <person name="Kanda Y."/>
            <person name="Asai T."/>
        </authorList>
    </citation>
    <scope>FUNCTION</scope>
    <scope>PATHWAY</scope>
    <scope>BIOTECHNOLOGY</scope>
</reference>
<gene>
    <name evidence="8" type="primary">dpmaA</name>
    <name type="ORF">MANI_006324</name>
</gene>
<evidence type="ECO:0000255" key="1"/>
<evidence type="ECO:0000255" key="2">
    <source>
        <dbReference type="PROSITE-ProRule" id="PRU00258"/>
    </source>
</evidence>
<evidence type="ECO:0000255" key="3">
    <source>
        <dbReference type="PROSITE-ProRule" id="PRU01348"/>
    </source>
</evidence>
<evidence type="ECO:0000255" key="4">
    <source>
        <dbReference type="PROSITE-ProRule" id="PRU01363"/>
    </source>
</evidence>
<evidence type="ECO:0000255" key="5">
    <source>
        <dbReference type="PROSITE-ProRule" id="PRU10022"/>
    </source>
</evidence>
<evidence type="ECO:0000256" key="6">
    <source>
        <dbReference type="SAM" id="MobiDB-lite"/>
    </source>
</evidence>
<evidence type="ECO:0000269" key="7">
    <source>
    </source>
</evidence>
<evidence type="ECO:0000303" key="8">
    <source>
    </source>
</evidence>
<evidence type="ECO:0000305" key="9"/>
<evidence type="ECO:0000305" key="10">
    <source>
    </source>
</evidence>
<protein>
    <recommendedName>
        <fullName evidence="8">Non-reducing polyketide synthase dpmaA</fullName>
        <ecNumber evidence="10">2.3.1.-</ecNumber>
    </recommendedName>
    <alternativeName>
        <fullName evidence="8">Diterpenoid pyrone biosynthesis cluster protein A</fullName>
    </alternativeName>
</protein>
<dbReference type="EC" id="2.3.1.-" evidence="10"/>
<dbReference type="EMBL" id="JNNZ01000128">
    <property type="protein sequence ID" value="KFG81921.1"/>
    <property type="molecule type" value="Genomic_DNA"/>
</dbReference>
<dbReference type="SMR" id="P9WEX6"/>
<dbReference type="VEuPathDB" id="FungiDB:MAN_09812"/>
<dbReference type="OrthoDB" id="5442at5529"/>
<dbReference type="UniPathway" id="UPA00213"/>
<dbReference type="GO" id="GO:0004315">
    <property type="term" value="F:3-oxoacyl-[acyl-carrier-protein] synthase activity"/>
    <property type="evidence" value="ECO:0007669"/>
    <property type="project" value="InterPro"/>
</dbReference>
<dbReference type="GO" id="GO:0004312">
    <property type="term" value="F:fatty acid synthase activity"/>
    <property type="evidence" value="ECO:0007669"/>
    <property type="project" value="TreeGrafter"/>
</dbReference>
<dbReference type="GO" id="GO:0008168">
    <property type="term" value="F:methyltransferase activity"/>
    <property type="evidence" value="ECO:0007669"/>
    <property type="project" value="UniProtKB-KW"/>
</dbReference>
<dbReference type="GO" id="GO:0006633">
    <property type="term" value="P:fatty acid biosynthetic process"/>
    <property type="evidence" value="ECO:0007669"/>
    <property type="project" value="InterPro"/>
</dbReference>
<dbReference type="GO" id="GO:0032259">
    <property type="term" value="P:methylation"/>
    <property type="evidence" value="ECO:0007669"/>
    <property type="project" value="UniProtKB-KW"/>
</dbReference>
<dbReference type="GO" id="GO:0044550">
    <property type="term" value="P:secondary metabolite biosynthetic process"/>
    <property type="evidence" value="ECO:0007669"/>
    <property type="project" value="UniProtKB-ARBA"/>
</dbReference>
<dbReference type="GO" id="GO:0016114">
    <property type="term" value="P:terpenoid biosynthetic process"/>
    <property type="evidence" value="ECO:0007669"/>
    <property type="project" value="UniProtKB-UniPathway"/>
</dbReference>
<dbReference type="CDD" id="cd02440">
    <property type="entry name" value="AdoMet_MTases"/>
    <property type="match status" value="1"/>
</dbReference>
<dbReference type="CDD" id="cd00833">
    <property type="entry name" value="PKS"/>
    <property type="match status" value="1"/>
</dbReference>
<dbReference type="Gene3D" id="3.30.70.3290">
    <property type="match status" value="1"/>
</dbReference>
<dbReference type="Gene3D" id="3.40.47.10">
    <property type="match status" value="1"/>
</dbReference>
<dbReference type="Gene3D" id="1.10.1200.10">
    <property type="entry name" value="ACP-like"/>
    <property type="match status" value="1"/>
</dbReference>
<dbReference type="Gene3D" id="3.40.366.10">
    <property type="entry name" value="Malonyl-Coenzyme A Acyl Carrier Protein, domain 2"/>
    <property type="match status" value="2"/>
</dbReference>
<dbReference type="Gene3D" id="3.10.129.110">
    <property type="entry name" value="Polyketide synthase dehydratase"/>
    <property type="match status" value="1"/>
</dbReference>
<dbReference type="Gene3D" id="3.40.50.150">
    <property type="entry name" value="Vaccinia Virus protein VP39"/>
    <property type="match status" value="1"/>
</dbReference>
<dbReference type="InterPro" id="IPR001227">
    <property type="entry name" value="Ac_transferase_dom_sf"/>
</dbReference>
<dbReference type="InterPro" id="IPR036736">
    <property type="entry name" value="ACP-like_sf"/>
</dbReference>
<dbReference type="InterPro" id="IPR014043">
    <property type="entry name" value="Acyl_transferase_dom"/>
</dbReference>
<dbReference type="InterPro" id="IPR016035">
    <property type="entry name" value="Acyl_Trfase/lysoPLipase"/>
</dbReference>
<dbReference type="InterPro" id="IPR018201">
    <property type="entry name" value="Ketoacyl_synth_AS"/>
</dbReference>
<dbReference type="InterPro" id="IPR014031">
    <property type="entry name" value="Ketoacyl_synth_C"/>
</dbReference>
<dbReference type="InterPro" id="IPR014030">
    <property type="entry name" value="Ketoacyl_synth_N"/>
</dbReference>
<dbReference type="InterPro" id="IPR016036">
    <property type="entry name" value="Malonyl_transacylase_ACP-bd"/>
</dbReference>
<dbReference type="InterPro" id="IPR013217">
    <property type="entry name" value="Methyltransf_12"/>
</dbReference>
<dbReference type="InterPro" id="IPR020841">
    <property type="entry name" value="PKS_Beta-ketoAc_synthase_dom"/>
</dbReference>
<dbReference type="InterPro" id="IPR042104">
    <property type="entry name" value="PKS_dehydratase_sf"/>
</dbReference>
<dbReference type="InterPro" id="IPR049900">
    <property type="entry name" value="PKS_mFAS_DH"/>
</dbReference>
<dbReference type="InterPro" id="IPR050091">
    <property type="entry name" value="PKS_NRPS_Biosynth_Enz"/>
</dbReference>
<dbReference type="InterPro" id="IPR009081">
    <property type="entry name" value="PP-bd_ACP"/>
</dbReference>
<dbReference type="InterPro" id="IPR029063">
    <property type="entry name" value="SAM-dependent_MTases_sf"/>
</dbReference>
<dbReference type="InterPro" id="IPR032088">
    <property type="entry name" value="SAT"/>
</dbReference>
<dbReference type="InterPro" id="IPR016039">
    <property type="entry name" value="Thiolase-like"/>
</dbReference>
<dbReference type="PANTHER" id="PTHR43775">
    <property type="entry name" value="FATTY ACID SYNTHASE"/>
    <property type="match status" value="1"/>
</dbReference>
<dbReference type="PANTHER" id="PTHR43775:SF21">
    <property type="entry name" value="NON-REDUCING POLYKETIDE SYNTHASE AUSA-RELATED"/>
    <property type="match status" value="1"/>
</dbReference>
<dbReference type="Pfam" id="PF00698">
    <property type="entry name" value="Acyl_transf_1"/>
    <property type="match status" value="1"/>
</dbReference>
<dbReference type="Pfam" id="PF18558">
    <property type="entry name" value="HTH_51"/>
    <property type="match status" value="1"/>
</dbReference>
<dbReference type="Pfam" id="PF00109">
    <property type="entry name" value="ketoacyl-synt"/>
    <property type="match status" value="1"/>
</dbReference>
<dbReference type="Pfam" id="PF02801">
    <property type="entry name" value="Ketoacyl-synt_C"/>
    <property type="match status" value="1"/>
</dbReference>
<dbReference type="Pfam" id="PF08242">
    <property type="entry name" value="Methyltransf_12"/>
    <property type="match status" value="1"/>
</dbReference>
<dbReference type="Pfam" id="PF00550">
    <property type="entry name" value="PP-binding"/>
    <property type="match status" value="1"/>
</dbReference>
<dbReference type="Pfam" id="PF16073">
    <property type="entry name" value="SAT"/>
    <property type="match status" value="1"/>
</dbReference>
<dbReference type="SMART" id="SM00827">
    <property type="entry name" value="PKS_AT"/>
    <property type="match status" value="1"/>
</dbReference>
<dbReference type="SMART" id="SM00825">
    <property type="entry name" value="PKS_KS"/>
    <property type="match status" value="1"/>
</dbReference>
<dbReference type="SUPFAM" id="SSF47336">
    <property type="entry name" value="ACP-like"/>
    <property type="match status" value="1"/>
</dbReference>
<dbReference type="SUPFAM" id="SSF52151">
    <property type="entry name" value="FabD/lysophospholipase-like"/>
    <property type="match status" value="1"/>
</dbReference>
<dbReference type="SUPFAM" id="SSF55048">
    <property type="entry name" value="Probable ACP-binding domain of malonyl-CoA ACP transacylase"/>
    <property type="match status" value="1"/>
</dbReference>
<dbReference type="SUPFAM" id="SSF53335">
    <property type="entry name" value="S-adenosyl-L-methionine-dependent methyltransferases"/>
    <property type="match status" value="1"/>
</dbReference>
<dbReference type="SUPFAM" id="SSF53901">
    <property type="entry name" value="Thiolase-like"/>
    <property type="match status" value="1"/>
</dbReference>
<dbReference type="PROSITE" id="PS50075">
    <property type="entry name" value="CARRIER"/>
    <property type="match status" value="1"/>
</dbReference>
<dbReference type="PROSITE" id="PS00606">
    <property type="entry name" value="KS3_1"/>
    <property type="match status" value="1"/>
</dbReference>
<dbReference type="PROSITE" id="PS52004">
    <property type="entry name" value="KS3_2"/>
    <property type="match status" value="1"/>
</dbReference>
<dbReference type="PROSITE" id="PS52019">
    <property type="entry name" value="PKS_MFAS_DH"/>
    <property type="match status" value="1"/>
</dbReference>
<keyword id="KW-0489">Methyltransferase</keyword>
<keyword id="KW-0511">Multifunctional enzyme</keyword>
<keyword id="KW-0596">Phosphopantetheine</keyword>
<keyword id="KW-0597">Phosphoprotein</keyword>
<keyword id="KW-0808">Transferase</keyword>
<comment type="function">
    <text evidence="7 10">Non-reducing polyketide synthase; part of the gene cluster that mediates the biosynthesis of the diterpenoid pyrones subglutinols A and B (PubMed:32286350). The first step of the pathway is the synthesis of the alpha-pyrone moiety by the polyketide synthase dpmaA via condensation of one acetyl-CoA starter unit with 3 malonyl-CoA units and 2 methylations (Probable). The alpha-pyrone is then combined with geranylgeranyl pyrophosphate (GGPP) formed by the GGPP synthase dpmaD through the action of the prenyltransferase dpmaC to yield a linear alpha-pyrone diterpenoid (Probable). Subsequent steps in the diterpenoid pyrone biosynthetic pathway involve the decalin core formation, which is initiated by the epoxidation of the C10-C11 olefin by the FAD-dependent oxidoreductase dpmaE, and is followed by a cyclization cascade catalyzed by the terpene cyclase dpmaB (Probable). The dehydrogenase dpmaF is then involved in tetrahydrofuran (THF) ring formation at the C5 unit to complete the formation of subglutinols A and B (PubMed:32286350).</text>
</comment>
<comment type="pathway">
    <text evidence="7">Secondary metabolite biosynthesis; terpenoid biosynthesis.</text>
</comment>
<comment type="domain">
    <text evidence="9">Multidomain protein; including a starter unit:ACP transacylase (SAT) that selects the starter unit; a ketosynthase (KS) that catalyzes repeated decarboxylative condensation to elongate the polyketide backbone; a malonyl-CoA:ACP transacylase (MAT) that selects and transfers the extender unit malonyl-CoA; a product template (PT) domain that controls the immediate cyclization regioselectivity of the reactive polyketide backbone; a methyltransferase (CMeT) domain responsible for methylations; and an acyl-carrier protein (ACP) that serves as the tether of the growing and completed polyketide via its phosphopantetheinyl arm.</text>
</comment>
<comment type="biotechnology">
    <text evidence="7">Diterpenoid pyrones display various biological activities and subglutinol A shows insecticidal and anti-HIV activities.</text>
</comment>
<sequence>MRVNTPSLLICGPMISQADAAYLPQVRSNLVHNKNLSYLREAVSELPNLWLRLVREEPSLGEIDVALFLDNLSQWVKGNSTQPTASRDSRNTQWAVLTVLVQIVEYMEYLDNFSSRDEDGCGHLDAHAALLDHLHEGGIQGLCIGLLTALALACAPSHTEIAKYGAVAVRLALCCGAYIDLNEAKSPAKTICVTTRWPGDDGDDKGDIDRKCDEQLQAILDKYPDAYKSVQTDVSTATITSNEGNVLALLTELEKDGAISKRIDLHGRYHYGGNQAALDKLLQLSSALPMLQFPRRSRLVVPVRNNCNGNIVEDNTALHEMALRCILVENAEWFKTISSSISANTRQAQLLVLGPVNCVPRSLLLRSPQPISLSVSGKADNIYPDQSIAIIGSSCCFPGAENPRQLWEFIRTKQTRGVVDAAGSFDCSFFRKSPREAEYMDPQQRLGLHLAQEALESGGYFSPSSSATKNVGCYLGISSCDYEDNVNSHPPTAYSFTGTARAFASGRISHFFGLTGPSMVIDTACSSSGVAINTACRAIQSGECTMALAGGINLISREARTQENLAAASFLSPTGQCRPFDSKANGYRRGEGGGLVLLKKLSSAVADGDVVLGVIAATAVNQSEGNKSITLPSSESQTSLYRRVLESANMKPRHISYVEAHGTGTQKGDPIECQSIRTVFGGTLRPACRQLHVGSIKSNIGHSEAASGIAALLKVLQMLHHRVIPPQANFEELNPAISPLHDDNIEISRQTKPWEERFRAALVNNYGASGTNAAMLVCQPPSIQHSLPLFPNRPCHYPILLTSHSNESLQLYCRNILRFIENQNNVDSDEEVLANTAFHLAQRQDHSLSFRLTFSVSSIEELKSKLQQQSTSQSYKDGPIQKHSGQPVVVVLAGQTGRRVRLSHEIYASSELLQRHLGRCDRALQTMGFTSLFPGIFDTEPVEDLVQAHCMLFSLQYSVAMSWVDSGLKIDALVGHSLGQLTALCISGMLSLQDGLKLISGRASLIQSKWGAECGAMLSVDADAETVQNLADSLPAGYKVEIACYNSSQSHVVVGTKAAITAFEKAADLRGVSLRRLAISHGFHSEMIDGILPDYNKLVQGLVLHPPAIAIEPCSQSGHSWANATPEIIARQSREPVYFANAISRLEKRFGSCIWLEAGWGSAGVNMARRALTHGPTRSLSTHSFYPAALGEPDSVKALADTTINLWNAGIRVQFWLYHRSQTGSPAPLELPLHPFMKSEYLLPVVKHSKKAQNEKVGQPVIQEKATLVSLIGKTQNAGVQTVEYSINQNSEEYSVYVRGRTVFEHFLAPVSMYIESATRAFRLLSTHKLVSFSTSASMELKNLKLHAPFGFDLQKSLRMILRKLGEDAWEFRVESHPIHEKERGSILQATGVITLQEVYSHLAPHRPVLRRLYDRCEELGKDVSASVVQGDFIKKIINSVARYDDRYIGVRSITSKGFETVAHVFEPEIASQFNPTSPFNPLLLDNFLLIAEIQANNLGGVTPDEIYVGNGFDAATAYTNAEDSEPSTKGHWVGLYSFDHQENDGILCDIFIFCAERKILSMTILGAKFQKIAISSLKRALKTINGVPQTSGGRTPSSSITEFISGDDASPCPPIPGADKPIFIREDDFGSMTTSGHMDEENHLIPEYDVISGSSRSTSSSPPSLESRSQAMETEEITEGAGSALFNLLSNHLNYPKGLSPDTPLGALGLDSLVAIQLQSDIEQMFGKNSQLMDINESSTFSTLFHTIFPQQQTDQFGFVPLHDQTGKDRLESAVPLRLGYSHIKHAAPSFNDSLDRSNTLFIRQVPHAMDALKQNISSTIKAAGFHDFFSDVHPRQRSLVLAYIVQAFRELGCDIRSLRVGDELPSVQFKPKYQNLMNRLFDILGSEGVINVLNKRYLGGLASFPERSAEDMHKAILNDYPSYHPDHKLLHTTGARLADCISGKVDPLQILFQNAASIKLLEDVYVKSPMFGTGNLLLGEFMNCLFSYNKTPDRLNHIRILEIGAGTGATTQLVVDRLLACNVDFTYTFTDVSAALVASAREKLTTRYGQHQRFDMEFETLNIEKEPPASFAQSYDLVISANCIHATRDLRKSCSNIEKLLRKDGGMLCLLELTRPLEWLDCVFGLLDGWWRFDDHRTYALAGEQDWKTILLQSGFDHIDWTDDGSREAQQLRLITAWR</sequence>